<gene>
    <name evidence="1" type="primary">hslO</name>
    <name type="ordered locus">Tpet_1389</name>
</gene>
<evidence type="ECO:0000255" key="1">
    <source>
        <dbReference type="HAMAP-Rule" id="MF_00117"/>
    </source>
</evidence>
<proteinExistence type="inferred from homology"/>
<accession>A5IMI0</accession>
<sequence length="290" mass="32612">MIYYGTMFDHKVRFSIVRMREVVEEARNRHSLSYLATVVLGRALIGAALVTPWLAEKERWTLDIEGNGPIRRVVAQSTSEFTVRGYVANPKVELPLNEKGKFDVAGAIGQGVLRVVRDLGLKTPFVSQLPLVSGEIAEDLAYYFAVSEQIPSAFSIGVLVDSGGVKIAGGFAVQIIDRTLEQEKVELIERNIKNLPYITELFQKAEPLDVLERIFGEKVGFVETAEIRYKCDCNREKAKNALLVLDKKELEDMRKEGKGEVVCKWCNTKYVFSEEELEELLKFKVDNSGS</sequence>
<protein>
    <recommendedName>
        <fullName evidence="1">33 kDa chaperonin</fullName>
    </recommendedName>
    <alternativeName>
        <fullName evidence="1">Heat shock protein 33 homolog</fullName>
        <shortName evidence="1">HSP33</shortName>
    </alternativeName>
</protein>
<name>HSLO_THEP1</name>
<comment type="function">
    <text evidence="1">Redox regulated molecular chaperone. Protects both thermally unfolding and oxidatively damaged proteins from irreversible aggregation. Plays an important role in the bacterial defense system toward oxidative stress.</text>
</comment>
<comment type="subcellular location">
    <subcellularLocation>
        <location evidence="1">Cytoplasm</location>
    </subcellularLocation>
</comment>
<comment type="PTM">
    <text evidence="1">Under oxidizing conditions two disulfide bonds are formed involving the reactive cysteines. Under reducing conditions zinc is bound to the reactive cysteines and the protein is inactive.</text>
</comment>
<comment type="similarity">
    <text evidence="1">Belongs to the HSP33 family.</text>
</comment>
<organism>
    <name type="scientific">Thermotoga petrophila (strain ATCC BAA-488 / DSM 13995 / JCM 10881 / RKU-1)</name>
    <dbReference type="NCBI Taxonomy" id="390874"/>
    <lineage>
        <taxon>Bacteria</taxon>
        <taxon>Thermotogati</taxon>
        <taxon>Thermotogota</taxon>
        <taxon>Thermotogae</taxon>
        <taxon>Thermotogales</taxon>
        <taxon>Thermotogaceae</taxon>
        <taxon>Thermotoga</taxon>
    </lineage>
</organism>
<dbReference type="EMBL" id="CP000702">
    <property type="protein sequence ID" value="ABQ47403.1"/>
    <property type="molecule type" value="Genomic_DNA"/>
</dbReference>
<dbReference type="RefSeq" id="WP_011943862.1">
    <property type="nucleotide sequence ID" value="NC_009486.1"/>
</dbReference>
<dbReference type="SMR" id="A5IMI0"/>
<dbReference type="STRING" id="390874.Tpet_1389"/>
<dbReference type="KEGG" id="tpt:Tpet_1389"/>
<dbReference type="eggNOG" id="COG1281">
    <property type="taxonomic scope" value="Bacteria"/>
</dbReference>
<dbReference type="HOGENOM" id="CLU_054493_1_0_0"/>
<dbReference type="Proteomes" id="UP000006558">
    <property type="component" value="Chromosome"/>
</dbReference>
<dbReference type="GO" id="GO:0005737">
    <property type="term" value="C:cytoplasm"/>
    <property type="evidence" value="ECO:0007669"/>
    <property type="project" value="UniProtKB-SubCell"/>
</dbReference>
<dbReference type="GO" id="GO:0044183">
    <property type="term" value="F:protein folding chaperone"/>
    <property type="evidence" value="ECO:0007669"/>
    <property type="project" value="TreeGrafter"/>
</dbReference>
<dbReference type="GO" id="GO:0051082">
    <property type="term" value="F:unfolded protein binding"/>
    <property type="evidence" value="ECO:0007669"/>
    <property type="project" value="UniProtKB-UniRule"/>
</dbReference>
<dbReference type="GO" id="GO:0042026">
    <property type="term" value="P:protein refolding"/>
    <property type="evidence" value="ECO:0007669"/>
    <property type="project" value="TreeGrafter"/>
</dbReference>
<dbReference type="CDD" id="cd00498">
    <property type="entry name" value="Hsp33"/>
    <property type="match status" value="1"/>
</dbReference>
<dbReference type="Gene3D" id="3.55.30.10">
    <property type="entry name" value="Hsp33 domain"/>
    <property type="match status" value="1"/>
</dbReference>
<dbReference type="Gene3D" id="3.90.1280.10">
    <property type="entry name" value="HSP33 redox switch-like"/>
    <property type="match status" value="1"/>
</dbReference>
<dbReference type="HAMAP" id="MF_00117">
    <property type="entry name" value="HslO"/>
    <property type="match status" value="1"/>
</dbReference>
<dbReference type="InterPro" id="IPR000397">
    <property type="entry name" value="Heat_shock_Hsp33"/>
</dbReference>
<dbReference type="InterPro" id="IPR016154">
    <property type="entry name" value="Heat_shock_Hsp33_C"/>
</dbReference>
<dbReference type="InterPro" id="IPR016153">
    <property type="entry name" value="Heat_shock_Hsp33_N"/>
</dbReference>
<dbReference type="NCBIfam" id="NF001033">
    <property type="entry name" value="PRK00114.1"/>
    <property type="match status" value="1"/>
</dbReference>
<dbReference type="PANTHER" id="PTHR30111">
    <property type="entry name" value="33 KDA CHAPERONIN"/>
    <property type="match status" value="1"/>
</dbReference>
<dbReference type="PANTHER" id="PTHR30111:SF1">
    <property type="entry name" value="33 KDA CHAPERONIN"/>
    <property type="match status" value="1"/>
</dbReference>
<dbReference type="Pfam" id="PF01430">
    <property type="entry name" value="HSP33"/>
    <property type="match status" value="1"/>
</dbReference>
<dbReference type="PIRSF" id="PIRSF005261">
    <property type="entry name" value="Heat_shock_Hsp33"/>
    <property type="match status" value="1"/>
</dbReference>
<dbReference type="SUPFAM" id="SSF64397">
    <property type="entry name" value="Hsp33 domain"/>
    <property type="match status" value="1"/>
</dbReference>
<dbReference type="SUPFAM" id="SSF118352">
    <property type="entry name" value="HSP33 redox switch-like"/>
    <property type="match status" value="1"/>
</dbReference>
<feature type="chain" id="PRO_1000015591" description="33 kDa chaperonin">
    <location>
        <begin position="1"/>
        <end position="290"/>
    </location>
</feature>
<feature type="disulfide bond" description="Redox-active" evidence="1">
    <location>
        <begin position="231"/>
        <end position="233"/>
    </location>
</feature>
<feature type="disulfide bond" description="Redox-active" evidence="1">
    <location>
        <begin position="263"/>
        <end position="266"/>
    </location>
</feature>
<keyword id="KW-0143">Chaperone</keyword>
<keyword id="KW-0963">Cytoplasm</keyword>
<keyword id="KW-1015">Disulfide bond</keyword>
<keyword id="KW-0676">Redox-active center</keyword>
<keyword id="KW-0862">Zinc</keyword>
<reference key="1">
    <citation type="submission" date="2007-05" db="EMBL/GenBank/DDBJ databases">
        <title>Complete sequence of Thermotoga petrophila RKU-1.</title>
        <authorList>
            <consortium name="US DOE Joint Genome Institute"/>
            <person name="Copeland A."/>
            <person name="Lucas S."/>
            <person name="Lapidus A."/>
            <person name="Barry K."/>
            <person name="Glavina del Rio T."/>
            <person name="Dalin E."/>
            <person name="Tice H."/>
            <person name="Pitluck S."/>
            <person name="Sims D."/>
            <person name="Brettin T."/>
            <person name="Bruce D."/>
            <person name="Detter J.C."/>
            <person name="Han C."/>
            <person name="Tapia R."/>
            <person name="Schmutz J."/>
            <person name="Larimer F."/>
            <person name="Land M."/>
            <person name="Hauser L."/>
            <person name="Kyrpides N."/>
            <person name="Mikhailova N."/>
            <person name="Nelson K."/>
            <person name="Gogarten J.P."/>
            <person name="Noll K."/>
            <person name="Richardson P."/>
        </authorList>
    </citation>
    <scope>NUCLEOTIDE SEQUENCE [LARGE SCALE GENOMIC DNA]</scope>
    <source>
        <strain>ATCC BAA-488 / DSM 13995 / JCM 10881 / RKU-1</strain>
    </source>
</reference>